<feature type="chain" id="PRO_0000177195" description="Large ribosomal subunit protein bL20">
    <location>
        <begin position="1"/>
        <end position="126"/>
    </location>
</feature>
<keyword id="KW-1185">Reference proteome</keyword>
<keyword id="KW-0687">Ribonucleoprotein</keyword>
<keyword id="KW-0689">Ribosomal protein</keyword>
<keyword id="KW-0694">RNA-binding</keyword>
<keyword id="KW-0699">rRNA-binding</keyword>
<organism>
    <name type="scientific">Nocardia farcinica (strain IFM 10152)</name>
    <dbReference type="NCBI Taxonomy" id="247156"/>
    <lineage>
        <taxon>Bacteria</taxon>
        <taxon>Bacillati</taxon>
        <taxon>Actinomycetota</taxon>
        <taxon>Actinomycetes</taxon>
        <taxon>Mycobacteriales</taxon>
        <taxon>Nocardiaceae</taxon>
        <taxon>Nocardia</taxon>
    </lineage>
</organism>
<comment type="function">
    <text evidence="1">Binds directly to 23S ribosomal RNA and is necessary for the in vitro assembly process of the 50S ribosomal subunit. It is not involved in the protein synthesizing functions of that subunit.</text>
</comment>
<comment type="similarity">
    <text evidence="1">Belongs to the bacterial ribosomal protein bL20 family.</text>
</comment>
<evidence type="ECO:0000255" key="1">
    <source>
        <dbReference type="HAMAP-Rule" id="MF_00382"/>
    </source>
</evidence>
<evidence type="ECO:0000305" key="2"/>
<proteinExistence type="inferred from homology"/>
<reference key="1">
    <citation type="journal article" date="2004" name="Proc. Natl. Acad. Sci. U.S.A.">
        <title>The complete genomic sequence of Nocardia farcinica IFM 10152.</title>
        <authorList>
            <person name="Ishikawa J."/>
            <person name="Yamashita A."/>
            <person name="Mikami Y."/>
            <person name="Hoshino Y."/>
            <person name="Kurita H."/>
            <person name="Hotta K."/>
            <person name="Shiba T."/>
            <person name="Hattori M."/>
        </authorList>
    </citation>
    <scope>NUCLEOTIDE SEQUENCE [LARGE SCALE GENOMIC DNA]</scope>
    <source>
        <strain>IFM 10152</strain>
    </source>
</reference>
<name>RL20_NOCFA</name>
<gene>
    <name evidence="1" type="primary">rplT</name>
    <name type="ordered locus">NFA_19160</name>
</gene>
<protein>
    <recommendedName>
        <fullName evidence="1">Large ribosomal subunit protein bL20</fullName>
    </recommendedName>
    <alternativeName>
        <fullName evidence="2">50S ribosomal protein L20</fullName>
    </alternativeName>
</protein>
<dbReference type="EMBL" id="AP006618">
    <property type="protein sequence ID" value="BAD56762.1"/>
    <property type="molecule type" value="Genomic_DNA"/>
</dbReference>
<dbReference type="RefSeq" id="WP_011208447.1">
    <property type="nucleotide sequence ID" value="NC_006361.1"/>
</dbReference>
<dbReference type="SMR" id="Q5YYH9"/>
<dbReference type="STRING" id="247156.NFA_19160"/>
<dbReference type="GeneID" id="61132698"/>
<dbReference type="KEGG" id="nfa:NFA_19160"/>
<dbReference type="eggNOG" id="COG0292">
    <property type="taxonomic scope" value="Bacteria"/>
</dbReference>
<dbReference type="HOGENOM" id="CLU_123265_0_0_11"/>
<dbReference type="OrthoDB" id="9808966at2"/>
<dbReference type="Proteomes" id="UP000006820">
    <property type="component" value="Chromosome"/>
</dbReference>
<dbReference type="GO" id="GO:1990904">
    <property type="term" value="C:ribonucleoprotein complex"/>
    <property type="evidence" value="ECO:0007669"/>
    <property type="project" value="UniProtKB-KW"/>
</dbReference>
<dbReference type="GO" id="GO:0005840">
    <property type="term" value="C:ribosome"/>
    <property type="evidence" value="ECO:0007669"/>
    <property type="project" value="UniProtKB-KW"/>
</dbReference>
<dbReference type="GO" id="GO:0019843">
    <property type="term" value="F:rRNA binding"/>
    <property type="evidence" value="ECO:0007669"/>
    <property type="project" value="UniProtKB-UniRule"/>
</dbReference>
<dbReference type="GO" id="GO:0003735">
    <property type="term" value="F:structural constituent of ribosome"/>
    <property type="evidence" value="ECO:0007669"/>
    <property type="project" value="InterPro"/>
</dbReference>
<dbReference type="GO" id="GO:0000027">
    <property type="term" value="P:ribosomal large subunit assembly"/>
    <property type="evidence" value="ECO:0007669"/>
    <property type="project" value="UniProtKB-UniRule"/>
</dbReference>
<dbReference type="GO" id="GO:0006412">
    <property type="term" value="P:translation"/>
    <property type="evidence" value="ECO:0007669"/>
    <property type="project" value="InterPro"/>
</dbReference>
<dbReference type="CDD" id="cd07026">
    <property type="entry name" value="Ribosomal_L20"/>
    <property type="match status" value="1"/>
</dbReference>
<dbReference type="FunFam" id="1.10.1900.20:FF:000001">
    <property type="entry name" value="50S ribosomal protein L20"/>
    <property type="match status" value="1"/>
</dbReference>
<dbReference type="Gene3D" id="6.10.160.10">
    <property type="match status" value="1"/>
</dbReference>
<dbReference type="Gene3D" id="1.10.1900.20">
    <property type="entry name" value="Ribosomal protein L20"/>
    <property type="match status" value="1"/>
</dbReference>
<dbReference type="HAMAP" id="MF_00382">
    <property type="entry name" value="Ribosomal_bL20"/>
    <property type="match status" value="1"/>
</dbReference>
<dbReference type="InterPro" id="IPR005813">
    <property type="entry name" value="Ribosomal_bL20"/>
</dbReference>
<dbReference type="InterPro" id="IPR049946">
    <property type="entry name" value="RIBOSOMAL_L20_CS"/>
</dbReference>
<dbReference type="InterPro" id="IPR035566">
    <property type="entry name" value="Ribosomal_protein_bL20_C"/>
</dbReference>
<dbReference type="NCBIfam" id="TIGR01032">
    <property type="entry name" value="rplT_bact"/>
    <property type="match status" value="1"/>
</dbReference>
<dbReference type="PANTHER" id="PTHR10986">
    <property type="entry name" value="39S RIBOSOMAL PROTEIN L20"/>
    <property type="match status" value="1"/>
</dbReference>
<dbReference type="Pfam" id="PF00453">
    <property type="entry name" value="Ribosomal_L20"/>
    <property type="match status" value="1"/>
</dbReference>
<dbReference type="PRINTS" id="PR00062">
    <property type="entry name" value="RIBOSOMALL20"/>
</dbReference>
<dbReference type="SUPFAM" id="SSF74731">
    <property type="entry name" value="Ribosomal protein L20"/>
    <property type="match status" value="1"/>
</dbReference>
<dbReference type="PROSITE" id="PS00937">
    <property type="entry name" value="RIBOSOMAL_L20"/>
    <property type="match status" value="1"/>
</dbReference>
<accession>Q5YYH9</accession>
<sequence>MARVKRAVNAQKKRRSILEASKGYRGQRSRLYRKAKEQQLHSLTYAYRDRRARKGDFRKLWIARINAAARLNDITYNRFIQGLKAAGVEVDRKNLAELAVSDAEAFAGLVAIAKAALPQDVNAPAA</sequence>